<keyword id="KW-0963">Cytoplasm</keyword>
<keyword id="KW-0256">Endoplasmic reticulum</keyword>
<keyword id="KW-0379">Hydroxylation</keyword>
<keyword id="KW-0687">Ribonucleoprotein</keyword>
<keyword id="KW-0689">Ribosomal protein</keyword>
<gene>
    <name type="primary">RpS23</name>
</gene>
<dbReference type="EMBL" id="AJ783764">
    <property type="protein sequence ID" value="CAH04127.1"/>
    <property type="molecule type" value="mRNA"/>
</dbReference>
<dbReference type="SMR" id="Q6EV23"/>
<dbReference type="GO" id="GO:0022627">
    <property type="term" value="C:cytosolic small ribosomal subunit"/>
    <property type="evidence" value="ECO:0000250"/>
    <property type="project" value="UniProtKB"/>
</dbReference>
<dbReference type="GO" id="GO:0005791">
    <property type="term" value="C:rough endoplasmic reticulum"/>
    <property type="evidence" value="ECO:0007669"/>
    <property type="project" value="UniProtKB-SubCell"/>
</dbReference>
<dbReference type="GO" id="GO:0003735">
    <property type="term" value="F:structural constituent of ribosome"/>
    <property type="evidence" value="ECO:0007669"/>
    <property type="project" value="InterPro"/>
</dbReference>
<dbReference type="GO" id="GO:0002181">
    <property type="term" value="P:cytoplasmic translation"/>
    <property type="evidence" value="ECO:0000250"/>
    <property type="project" value="UniProtKB"/>
</dbReference>
<dbReference type="CDD" id="cd03367">
    <property type="entry name" value="Ribosomal_S23"/>
    <property type="match status" value="1"/>
</dbReference>
<dbReference type="FunFam" id="2.40.50.140:FF:000007">
    <property type="entry name" value="40S ribosomal protein S23"/>
    <property type="match status" value="1"/>
</dbReference>
<dbReference type="Gene3D" id="2.40.50.140">
    <property type="entry name" value="Nucleic acid-binding proteins"/>
    <property type="match status" value="1"/>
</dbReference>
<dbReference type="InterPro" id="IPR012340">
    <property type="entry name" value="NA-bd_OB-fold"/>
</dbReference>
<dbReference type="InterPro" id="IPR006032">
    <property type="entry name" value="Ribosomal_uS12"/>
</dbReference>
<dbReference type="InterPro" id="IPR005680">
    <property type="entry name" value="Ribosomal_uS12_euk/arc"/>
</dbReference>
<dbReference type="NCBIfam" id="TIGR00982">
    <property type="entry name" value="uS12_E_A"/>
    <property type="match status" value="1"/>
</dbReference>
<dbReference type="PANTHER" id="PTHR11652">
    <property type="entry name" value="30S RIBOSOMAL PROTEIN S12 FAMILY MEMBER"/>
    <property type="match status" value="1"/>
</dbReference>
<dbReference type="Pfam" id="PF00164">
    <property type="entry name" value="Ribosom_S12_S23"/>
    <property type="match status" value="1"/>
</dbReference>
<dbReference type="PIRSF" id="PIRSF002133">
    <property type="entry name" value="Ribosomal_S12/S23"/>
    <property type="match status" value="1"/>
</dbReference>
<dbReference type="SUPFAM" id="SSF50249">
    <property type="entry name" value="Nucleic acid-binding proteins"/>
    <property type="match status" value="1"/>
</dbReference>
<dbReference type="PROSITE" id="PS00055">
    <property type="entry name" value="RIBOSOMAL_S12"/>
    <property type="match status" value="1"/>
</dbReference>
<proteinExistence type="evidence at transcript level"/>
<accession>Q6EV23</accession>
<sequence>MGKPRGIRTARKHVNHRREQRWADKDYKKAHMGTRWKANPFGGASHAKGIVLEKVGVEAKQPNSAIRKCVRVQLIKNGKKVTAFVPRDGCLNHIEENDEVLVAGFGRKGHAVGDIPGVRFKVVKVANVSLLALYKEKKERPRS</sequence>
<organism>
    <name type="scientific">Papilio dardanus</name>
    <name type="common">African swallowtail butterfly</name>
    <dbReference type="NCBI Taxonomy" id="77259"/>
    <lineage>
        <taxon>Eukaryota</taxon>
        <taxon>Metazoa</taxon>
        <taxon>Ecdysozoa</taxon>
        <taxon>Arthropoda</taxon>
        <taxon>Hexapoda</taxon>
        <taxon>Insecta</taxon>
        <taxon>Pterygota</taxon>
        <taxon>Neoptera</taxon>
        <taxon>Endopterygota</taxon>
        <taxon>Lepidoptera</taxon>
        <taxon>Glossata</taxon>
        <taxon>Ditrysia</taxon>
        <taxon>Papilionoidea</taxon>
        <taxon>Papilionidae</taxon>
        <taxon>Papilioninae</taxon>
        <taxon>Papilio</taxon>
    </lineage>
</organism>
<feature type="chain" id="PRO_0000146466" description="Small ribosomal subunit protein uS12">
    <location>
        <begin position="1"/>
        <end position="143"/>
    </location>
</feature>
<feature type="region of interest" description="Disordered" evidence="4">
    <location>
        <begin position="1"/>
        <end position="21"/>
    </location>
</feature>
<feature type="compositionally biased region" description="Basic residues" evidence="4">
    <location>
        <begin position="1"/>
        <end position="19"/>
    </location>
</feature>
<feature type="modified residue" description="Hydroxyproline" evidence="1">
    <location>
        <position position="62"/>
    </location>
</feature>
<evidence type="ECO:0000250" key="1"/>
<evidence type="ECO:0000250" key="2">
    <source>
        <dbReference type="UniProtKB" id="P62266"/>
    </source>
</evidence>
<evidence type="ECO:0000250" key="3">
    <source>
        <dbReference type="UniProtKB" id="Q6SA96"/>
    </source>
</evidence>
<evidence type="ECO:0000256" key="4">
    <source>
        <dbReference type="SAM" id="MobiDB-lite"/>
    </source>
</evidence>
<evidence type="ECO:0000305" key="5"/>
<protein>
    <recommendedName>
        <fullName evidence="5">Small ribosomal subunit protein uS12</fullName>
    </recommendedName>
    <alternativeName>
        <fullName>40S ribosomal protein S23</fullName>
    </alternativeName>
</protein>
<name>RS23_PAPDA</name>
<comment type="subunit">
    <text evidence="3">Component of the 40S small ribosomal subunit.</text>
</comment>
<comment type="subcellular location">
    <subcellularLocation>
        <location evidence="2">Cytoplasm</location>
        <location evidence="2">Cytosol</location>
    </subcellularLocation>
    <subcellularLocation>
        <location evidence="2">Cytoplasm</location>
    </subcellularLocation>
    <subcellularLocation>
        <location evidence="3">Rough endoplasmic reticulum</location>
    </subcellularLocation>
    <text evidence="2 3">Detected on cytosolic polysomes (By similarity). Detected in ribosomes that are associated with the rough endoplasmic reticulum (By similarity).</text>
</comment>
<comment type="similarity">
    <text evidence="5">Belongs to the universal ribosomal protein uS12 family.</text>
</comment>
<reference key="1">
    <citation type="submission" date="2004-07" db="EMBL/GenBank/DDBJ databases">
        <title>Phylogenomics of the translational machinery: ribosomal proteins from ESTs support the Coelomata hypothesis.</title>
        <authorList>
            <person name="Longhorn S.J."/>
            <person name="Foster P."/>
            <person name="Vogler A.P."/>
        </authorList>
    </citation>
    <scope>NUCLEOTIDE SEQUENCE [MRNA]</scope>
</reference>